<sequence>MTTIRLKENEPFEVAMRRFKRTIEKTGLLTDLRAREFYEKPTAERKRKLAAAVKRHYKRIRSQQLPKKLY</sequence>
<reference key="1">
    <citation type="journal article" date="2007" name="PLoS Genet.">
        <title>A tale of two oxidation states: bacterial colonization of arsenic-rich environments.</title>
        <authorList>
            <person name="Muller D."/>
            <person name="Medigue C."/>
            <person name="Koechler S."/>
            <person name="Barbe V."/>
            <person name="Barakat M."/>
            <person name="Talla E."/>
            <person name="Bonnefoy V."/>
            <person name="Krin E."/>
            <person name="Arsene-Ploetze F."/>
            <person name="Carapito C."/>
            <person name="Chandler M."/>
            <person name="Cournoyer B."/>
            <person name="Cruveiller S."/>
            <person name="Dossat C."/>
            <person name="Duval S."/>
            <person name="Heymann M."/>
            <person name="Leize E."/>
            <person name="Lieutaud A."/>
            <person name="Lievremont D."/>
            <person name="Makita Y."/>
            <person name="Mangenot S."/>
            <person name="Nitschke W."/>
            <person name="Ortet P."/>
            <person name="Perdrial N."/>
            <person name="Schoepp B."/>
            <person name="Siguier P."/>
            <person name="Simeonova D.D."/>
            <person name="Rouy Z."/>
            <person name="Segurens B."/>
            <person name="Turlin E."/>
            <person name="Vallenet D."/>
            <person name="van Dorsselaer A."/>
            <person name="Weiss S."/>
            <person name="Weissenbach J."/>
            <person name="Lett M.-C."/>
            <person name="Danchin A."/>
            <person name="Bertin P.N."/>
        </authorList>
    </citation>
    <scope>NUCLEOTIDE SEQUENCE [LARGE SCALE GENOMIC DNA]</scope>
    <source>
        <strain>ULPAs1</strain>
    </source>
</reference>
<protein>
    <recommendedName>
        <fullName evidence="1">Small ribosomal subunit protein bS21</fullName>
    </recommendedName>
    <alternativeName>
        <fullName evidence="2">30S ribosomal protein S21</fullName>
    </alternativeName>
</protein>
<feature type="chain" id="PRO_1000005122" description="Small ribosomal subunit protein bS21">
    <location>
        <begin position="1"/>
        <end position="70"/>
    </location>
</feature>
<dbReference type="EMBL" id="CU207211">
    <property type="protein sequence ID" value="CAL60656.1"/>
    <property type="molecule type" value="Genomic_DNA"/>
</dbReference>
<dbReference type="SMR" id="A4G2B9"/>
<dbReference type="STRING" id="204773.HEAR0439"/>
<dbReference type="KEGG" id="har:HEAR0439"/>
<dbReference type="eggNOG" id="COG0828">
    <property type="taxonomic scope" value="Bacteria"/>
</dbReference>
<dbReference type="HOGENOM" id="CLU_159258_1_2_4"/>
<dbReference type="OrthoDB" id="9799244at2"/>
<dbReference type="Proteomes" id="UP000006697">
    <property type="component" value="Chromosome"/>
</dbReference>
<dbReference type="GO" id="GO:1990904">
    <property type="term" value="C:ribonucleoprotein complex"/>
    <property type="evidence" value="ECO:0007669"/>
    <property type="project" value="UniProtKB-KW"/>
</dbReference>
<dbReference type="GO" id="GO:0005840">
    <property type="term" value="C:ribosome"/>
    <property type="evidence" value="ECO:0007669"/>
    <property type="project" value="UniProtKB-KW"/>
</dbReference>
<dbReference type="GO" id="GO:0003735">
    <property type="term" value="F:structural constituent of ribosome"/>
    <property type="evidence" value="ECO:0007669"/>
    <property type="project" value="InterPro"/>
</dbReference>
<dbReference type="GO" id="GO:0006412">
    <property type="term" value="P:translation"/>
    <property type="evidence" value="ECO:0007669"/>
    <property type="project" value="UniProtKB-UniRule"/>
</dbReference>
<dbReference type="Gene3D" id="1.20.5.1150">
    <property type="entry name" value="Ribosomal protein S8"/>
    <property type="match status" value="1"/>
</dbReference>
<dbReference type="HAMAP" id="MF_00358">
    <property type="entry name" value="Ribosomal_bS21"/>
    <property type="match status" value="1"/>
</dbReference>
<dbReference type="InterPro" id="IPR001911">
    <property type="entry name" value="Ribosomal_bS21"/>
</dbReference>
<dbReference type="InterPro" id="IPR038380">
    <property type="entry name" value="Ribosomal_bS21_sf"/>
</dbReference>
<dbReference type="NCBIfam" id="TIGR00030">
    <property type="entry name" value="S21p"/>
    <property type="match status" value="1"/>
</dbReference>
<dbReference type="PANTHER" id="PTHR21109">
    <property type="entry name" value="MITOCHONDRIAL 28S RIBOSOMAL PROTEIN S21"/>
    <property type="match status" value="1"/>
</dbReference>
<dbReference type="PANTHER" id="PTHR21109:SF22">
    <property type="entry name" value="SMALL RIBOSOMAL SUBUNIT PROTEIN BS21"/>
    <property type="match status" value="1"/>
</dbReference>
<dbReference type="Pfam" id="PF01165">
    <property type="entry name" value="Ribosomal_S21"/>
    <property type="match status" value="1"/>
</dbReference>
<dbReference type="PRINTS" id="PR00976">
    <property type="entry name" value="RIBOSOMALS21"/>
</dbReference>
<keyword id="KW-1185">Reference proteome</keyword>
<keyword id="KW-0687">Ribonucleoprotein</keyword>
<keyword id="KW-0689">Ribosomal protein</keyword>
<name>RS21_HERAR</name>
<proteinExistence type="inferred from homology"/>
<gene>
    <name evidence="1" type="primary">rpsU</name>
    <name type="ordered locus">HEAR0439</name>
</gene>
<organism>
    <name type="scientific">Herminiimonas arsenicoxydans</name>
    <dbReference type="NCBI Taxonomy" id="204773"/>
    <lineage>
        <taxon>Bacteria</taxon>
        <taxon>Pseudomonadati</taxon>
        <taxon>Pseudomonadota</taxon>
        <taxon>Betaproteobacteria</taxon>
        <taxon>Burkholderiales</taxon>
        <taxon>Oxalobacteraceae</taxon>
        <taxon>Herminiimonas</taxon>
    </lineage>
</organism>
<accession>A4G2B9</accession>
<evidence type="ECO:0000255" key="1">
    <source>
        <dbReference type="HAMAP-Rule" id="MF_00358"/>
    </source>
</evidence>
<evidence type="ECO:0000305" key="2"/>
<comment type="similarity">
    <text evidence="1">Belongs to the bacterial ribosomal protein bS21 family.</text>
</comment>